<feature type="chain" id="PRO_0000181413" description="Probable nicotinate-nucleotide adenylyltransferase">
    <location>
        <begin position="1"/>
        <end position="206"/>
    </location>
</feature>
<accession>Q7NE64</accession>
<reference key="1">
    <citation type="journal article" date="2003" name="DNA Res.">
        <title>Complete genome structure of Gloeobacter violaceus PCC 7421, a cyanobacterium that lacks thylakoids.</title>
        <authorList>
            <person name="Nakamura Y."/>
            <person name="Kaneko T."/>
            <person name="Sato S."/>
            <person name="Mimuro M."/>
            <person name="Miyashita H."/>
            <person name="Tsuchiya T."/>
            <person name="Sasamoto S."/>
            <person name="Watanabe A."/>
            <person name="Kawashima K."/>
            <person name="Kishida Y."/>
            <person name="Kiyokawa C."/>
            <person name="Kohara M."/>
            <person name="Matsumoto M."/>
            <person name="Matsuno A."/>
            <person name="Nakazaki N."/>
            <person name="Shimpo S."/>
            <person name="Takeuchi C."/>
            <person name="Yamada M."/>
            <person name="Tabata S."/>
        </authorList>
    </citation>
    <scope>NUCLEOTIDE SEQUENCE [LARGE SCALE GENOMIC DNA]</scope>
    <source>
        <strain>ATCC 29082 / PCC 7421</strain>
    </source>
</reference>
<comment type="function">
    <text evidence="1">Catalyzes the reversible adenylation of nicotinate mononucleotide (NaMN) to nicotinic acid adenine dinucleotide (NaAD).</text>
</comment>
<comment type="catalytic activity">
    <reaction evidence="1">
        <text>nicotinate beta-D-ribonucleotide + ATP + H(+) = deamido-NAD(+) + diphosphate</text>
        <dbReference type="Rhea" id="RHEA:22860"/>
        <dbReference type="ChEBI" id="CHEBI:15378"/>
        <dbReference type="ChEBI" id="CHEBI:30616"/>
        <dbReference type="ChEBI" id="CHEBI:33019"/>
        <dbReference type="ChEBI" id="CHEBI:57502"/>
        <dbReference type="ChEBI" id="CHEBI:58437"/>
        <dbReference type="EC" id="2.7.7.18"/>
    </reaction>
</comment>
<comment type="pathway">
    <text evidence="1">Cofactor biosynthesis; NAD(+) biosynthesis; deamido-NAD(+) from nicotinate D-ribonucleotide: step 1/1.</text>
</comment>
<comment type="similarity">
    <text evidence="1">Belongs to the NadD family.</text>
</comment>
<evidence type="ECO:0000255" key="1">
    <source>
        <dbReference type="HAMAP-Rule" id="MF_00244"/>
    </source>
</evidence>
<dbReference type="EC" id="2.7.7.18" evidence="1"/>
<dbReference type="EMBL" id="BA000045">
    <property type="protein sequence ID" value="BAC91957.1"/>
    <property type="molecule type" value="Genomic_DNA"/>
</dbReference>
<dbReference type="RefSeq" id="NP_926962.1">
    <property type="nucleotide sequence ID" value="NC_005125.1"/>
</dbReference>
<dbReference type="RefSeq" id="WP_011144004.1">
    <property type="nucleotide sequence ID" value="NC_005125.1"/>
</dbReference>
<dbReference type="SMR" id="Q7NE64"/>
<dbReference type="FunCoup" id="Q7NE64">
    <property type="interactions" value="134"/>
</dbReference>
<dbReference type="STRING" id="251221.gene:10761534"/>
<dbReference type="EnsemblBacteria" id="BAC91957">
    <property type="protein sequence ID" value="BAC91957"/>
    <property type="gene ID" value="BAC91957"/>
</dbReference>
<dbReference type="KEGG" id="gvi:glr4016"/>
<dbReference type="PATRIC" id="fig|251221.4.peg.4048"/>
<dbReference type="eggNOG" id="COG1057">
    <property type="taxonomic scope" value="Bacteria"/>
</dbReference>
<dbReference type="HOGENOM" id="CLU_069765_3_1_3"/>
<dbReference type="InParanoid" id="Q7NE64"/>
<dbReference type="OrthoDB" id="5295945at2"/>
<dbReference type="PhylomeDB" id="Q7NE64"/>
<dbReference type="UniPathway" id="UPA00253">
    <property type="reaction ID" value="UER00332"/>
</dbReference>
<dbReference type="Proteomes" id="UP000000557">
    <property type="component" value="Chromosome"/>
</dbReference>
<dbReference type="GO" id="GO:0005524">
    <property type="term" value="F:ATP binding"/>
    <property type="evidence" value="ECO:0007669"/>
    <property type="project" value="UniProtKB-KW"/>
</dbReference>
<dbReference type="GO" id="GO:0000309">
    <property type="term" value="F:nicotinamide-nucleotide adenylyltransferase activity"/>
    <property type="evidence" value="ECO:0000318"/>
    <property type="project" value="GO_Central"/>
</dbReference>
<dbReference type="GO" id="GO:0004515">
    <property type="term" value="F:nicotinate-nucleotide adenylyltransferase activity"/>
    <property type="evidence" value="ECO:0000318"/>
    <property type="project" value="GO_Central"/>
</dbReference>
<dbReference type="GO" id="GO:0009435">
    <property type="term" value="P:NAD biosynthetic process"/>
    <property type="evidence" value="ECO:0000318"/>
    <property type="project" value="GO_Central"/>
</dbReference>
<dbReference type="CDD" id="cd02165">
    <property type="entry name" value="NMNAT"/>
    <property type="match status" value="1"/>
</dbReference>
<dbReference type="FunFam" id="3.40.50.620:FF:000039">
    <property type="entry name" value="Probable nicotinate-nucleotide adenylyltransferase"/>
    <property type="match status" value="1"/>
</dbReference>
<dbReference type="Gene3D" id="3.40.50.620">
    <property type="entry name" value="HUPs"/>
    <property type="match status" value="1"/>
</dbReference>
<dbReference type="HAMAP" id="MF_00244">
    <property type="entry name" value="NaMN_adenylyltr"/>
    <property type="match status" value="1"/>
</dbReference>
<dbReference type="InterPro" id="IPR004821">
    <property type="entry name" value="Cyt_trans-like"/>
</dbReference>
<dbReference type="InterPro" id="IPR005248">
    <property type="entry name" value="NadD/NMNAT"/>
</dbReference>
<dbReference type="InterPro" id="IPR014729">
    <property type="entry name" value="Rossmann-like_a/b/a_fold"/>
</dbReference>
<dbReference type="NCBIfam" id="TIGR00125">
    <property type="entry name" value="cyt_tran_rel"/>
    <property type="match status" value="1"/>
</dbReference>
<dbReference type="NCBIfam" id="TIGR00482">
    <property type="entry name" value="nicotinate (nicotinamide) nucleotide adenylyltransferase"/>
    <property type="match status" value="1"/>
</dbReference>
<dbReference type="NCBIfam" id="NF000840">
    <property type="entry name" value="PRK00071.1-3"/>
    <property type="match status" value="1"/>
</dbReference>
<dbReference type="PANTHER" id="PTHR39321">
    <property type="entry name" value="NICOTINATE-NUCLEOTIDE ADENYLYLTRANSFERASE-RELATED"/>
    <property type="match status" value="1"/>
</dbReference>
<dbReference type="PANTHER" id="PTHR39321:SF3">
    <property type="entry name" value="PHOSPHOPANTETHEINE ADENYLYLTRANSFERASE"/>
    <property type="match status" value="1"/>
</dbReference>
<dbReference type="Pfam" id="PF01467">
    <property type="entry name" value="CTP_transf_like"/>
    <property type="match status" value="1"/>
</dbReference>
<dbReference type="SUPFAM" id="SSF52374">
    <property type="entry name" value="Nucleotidylyl transferase"/>
    <property type="match status" value="1"/>
</dbReference>
<sequence>MGERLGIFGGTFNPVHRGHLAMARAARDRCGLDQILWVPAAQPPHKPLAGGASIGDRVEMVRLAIAGEAGMALSLVDARRPGPSYAIDTLRLLEEQYPQAQWHWLLGQDGLADLPGWYRAAELIPRCRWIVVPRPGSGADPKQAMADLTERFGAVFVPLSDFECDISSTRVREQLAAGRAGWEALLPEQVVSYIHKRGLYDVPAGA</sequence>
<protein>
    <recommendedName>
        <fullName evidence="1">Probable nicotinate-nucleotide adenylyltransferase</fullName>
        <ecNumber evidence="1">2.7.7.18</ecNumber>
    </recommendedName>
    <alternativeName>
        <fullName evidence="1">Deamido-NAD(+) diphosphorylase</fullName>
    </alternativeName>
    <alternativeName>
        <fullName evidence="1">Deamido-NAD(+) pyrophosphorylase</fullName>
    </alternativeName>
    <alternativeName>
        <fullName evidence="1">Nicotinate mononucleotide adenylyltransferase</fullName>
        <shortName evidence="1">NaMN adenylyltransferase</shortName>
    </alternativeName>
</protein>
<name>NADD_GLOVI</name>
<gene>
    <name evidence="1" type="primary">nadD</name>
    <name type="ordered locus">glr4016</name>
</gene>
<proteinExistence type="inferred from homology"/>
<keyword id="KW-0067">ATP-binding</keyword>
<keyword id="KW-0520">NAD</keyword>
<keyword id="KW-0547">Nucleotide-binding</keyword>
<keyword id="KW-0548">Nucleotidyltransferase</keyword>
<keyword id="KW-0662">Pyridine nucleotide biosynthesis</keyword>
<keyword id="KW-1185">Reference proteome</keyword>
<keyword id="KW-0808">Transferase</keyword>
<organism>
    <name type="scientific">Gloeobacter violaceus (strain ATCC 29082 / PCC 7421)</name>
    <dbReference type="NCBI Taxonomy" id="251221"/>
    <lineage>
        <taxon>Bacteria</taxon>
        <taxon>Bacillati</taxon>
        <taxon>Cyanobacteriota</taxon>
        <taxon>Cyanophyceae</taxon>
        <taxon>Gloeobacterales</taxon>
        <taxon>Gloeobacteraceae</taxon>
        <taxon>Gloeobacter</taxon>
    </lineage>
</organism>